<keyword id="KW-0244">Early protein</keyword>
<keyword id="KW-1185">Reference proteome</keyword>
<comment type="induction">
    <text evidence="1">Expressed in the early phase of the viral replicative cycle.</text>
</comment>
<comment type="similarity">
    <text evidence="2">Belongs to the orthopoxvirus OPG058 family.</text>
</comment>
<accession>P0DON3</accession>
<accession>P33872</accession>
<dbReference type="EMBL" id="X69198">
    <property type="protein sequence ID" value="CAA48979.1"/>
    <property type="molecule type" value="Genomic_DNA"/>
</dbReference>
<dbReference type="PIR" id="I36840">
    <property type="entry name" value="I36840"/>
</dbReference>
<dbReference type="RefSeq" id="NP_042082.1">
    <property type="nucleotide sequence ID" value="NC_001611.1"/>
</dbReference>
<dbReference type="SMR" id="P0DON3"/>
<dbReference type="GeneID" id="1486574"/>
<dbReference type="KEGG" id="vg:1486574"/>
<dbReference type="Proteomes" id="UP000002060">
    <property type="component" value="Segment"/>
</dbReference>
<dbReference type="InterPro" id="IPR009280">
    <property type="entry name" value="Orthopox_F14"/>
</dbReference>
<dbReference type="Pfam" id="PF06076">
    <property type="entry name" value="Orthopox_F14"/>
    <property type="match status" value="1"/>
</dbReference>
<organism>
    <name type="scientific">Variola virus (isolate Human/India/Ind3/1967)</name>
    <name type="common">VARV</name>
    <name type="synonym">Smallpox virus</name>
    <dbReference type="NCBI Taxonomy" id="587200"/>
    <lineage>
        <taxon>Viruses</taxon>
        <taxon>Varidnaviria</taxon>
        <taxon>Bamfordvirae</taxon>
        <taxon>Nucleocytoviricota</taxon>
        <taxon>Pokkesviricetes</taxon>
        <taxon>Chitovirales</taxon>
        <taxon>Poxviridae</taxon>
        <taxon>Chordopoxvirinae</taxon>
        <taxon>Orthopoxvirus</taxon>
        <taxon>Variola virus</taxon>
    </lineage>
</organism>
<reference key="1">
    <citation type="journal article" date="1993" name="Virus Res.">
        <title>Analysis of the nucleotide sequence of a 43 kbp segment of the genome of variola virus India-1967 strain.</title>
        <authorList>
            <person name="Shchelkunov S.N."/>
            <person name="Blinov V.M."/>
            <person name="Resenchuk S.M."/>
            <person name="Totmenin A.V."/>
            <person name="Sandakhchiev L.S."/>
        </authorList>
    </citation>
    <scope>NUCLEOTIDE SEQUENCE [GENOMIC DNA]</scope>
</reference>
<reference key="2">
    <citation type="journal article" date="1993" name="FEBS Lett.">
        <title>Genes of variola and vaccinia viruses necessary to overcome the host protective mechanisms.</title>
        <authorList>
            <person name="Shchelkunov S.N."/>
            <person name="Blinov V.M."/>
            <person name="Sandakhchiev L.S."/>
        </authorList>
    </citation>
    <scope>NUCLEOTIDE SEQUENCE [GENOMIC DNA]</scope>
</reference>
<gene>
    <name type="primary">OPG058</name>
    <name type="ORF">C18L</name>
    <name type="ORF">F14L</name>
</gene>
<feature type="chain" id="PRO_0000099510" description="Protein OPG058">
    <location>
        <begin position="1"/>
        <end position="73"/>
    </location>
</feature>
<proteinExistence type="inferred from homology"/>
<organismHost>
    <name type="scientific">Homo sapiens</name>
    <name type="common">Human</name>
    <dbReference type="NCBI Taxonomy" id="9606"/>
</organismHost>
<evidence type="ECO:0000250" key="1">
    <source>
        <dbReference type="UniProtKB" id="P68707"/>
    </source>
</evidence>
<evidence type="ECO:0000305" key="2"/>
<sequence>MKHKVYSEGLEISTDFNSIISQLSTSDMDIEIDEDNITELLNILTELGCDVDFDEDFSDITDDVLESLMEQDM</sequence>
<protein>
    <recommendedName>
        <fullName>Protein OPG058</fullName>
    </recommendedName>
    <alternativeName>
        <fullName>Protein F14</fullName>
    </alternativeName>
</protein>
<name>PG058_VAR67</name>